<sequence length="295" mass="31820">MTNVTGTERVKRGMAEMQKGGVIMDVVNAEQAKIAEEAGAVAVMALERVPADIRAAGGVSRMADPTIVEEVMGAVSIPVMAKCRIGHLVEARVLESLGVDYIDESEVLTPADEVYHLNKRDYTVPFVCGCRDIGEAARRIAEGASMLRTKGEPGTGNIVEAVRHMRQVNAEIRQVASLREDELMTYAKNTGAPYEVLLEIKRLGRLPVVNFAAGGVATPADAALMMQLGADGVFVGSGIFKSENPEKFARAIVEATTHYEDYELIASLSKGLGNAMKGVEISTLLPEQRMQERGW</sequence>
<protein>
    <recommendedName>
        <fullName evidence="1">Pyridoxal 5'-phosphate synthase subunit PdxS</fullName>
        <shortName evidence="1">PLP synthase subunit PdxS</shortName>
        <ecNumber evidence="1">4.3.3.6</ecNumber>
    </recommendedName>
    <alternativeName>
        <fullName evidence="1">Pdx1</fullName>
    </alternativeName>
</protein>
<keyword id="KW-0456">Lyase</keyword>
<keyword id="KW-0663">Pyridoxal phosphate</keyword>
<keyword id="KW-0704">Schiff base</keyword>
<reference key="1">
    <citation type="submission" date="2008-10" db="EMBL/GenBank/DDBJ databases">
        <title>Genome sequence of Bacillus cereus B4264.</title>
        <authorList>
            <person name="Dodson R.J."/>
            <person name="Durkin A.S."/>
            <person name="Rosovitz M.J."/>
            <person name="Rasko D.A."/>
            <person name="Hoffmaster A."/>
            <person name="Ravel J."/>
            <person name="Sutton G."/>
        </authorList>
    </citation>
    <scope>NUCLEOTIDE SEQUENCE [LARGE SCALE GENOMIC DNA]</scope>
    <source>
        <strain>B4264</strain>
    </source>
</reference>
<accession>B7HII3</accession>
<dbReference type="EC" id="4.3.3.6" evidence="1"/>
<dbReference type="EMBL" id="CP001176">
    <property type="protein sequence ID" value="ACK61130.1"/>
    <property type="molecule type" value="Genomic_DNA"/>
</dbReference>
<dbReference type="RefSeq" id="WP_000186165.1">
    <property type="nucleotide sequence ID" value="NZ_VEHB01000027.1"/>
</dbReference>
<dbReference type="SMR" id="B7HII3"/>
<dbReference type="KEGG" id="bcb:BCB4264_A0014"/>
<dbReference type="HOGENOM" id="CLU_055352_1_0_9"/>
<dbReference type="UniPathway" id="UPA00245"/>
<dbReference type="Proteomes" id="UP000007096">
    <property type="component" value="Chromosome"/>
</dbReference>
<dbReference type="GO" id="GO:0036381">
    <property type="term" value="F:pyridoxal 5'-phosphate synthase (glutamine hydrolysing) activity"/>
    <property type="evidence" value="ECO:0007669"/>
    <property type="project" value="UniProtKB-UniRule"/>
</dbReference>
<dbReference type="GO" id="GO:0006520">
    <property type="term" value="P:amino acid metabolic process"/>
    <property type="evidence" value="ECO:0007669"/>
    <property type="project" value="TreeGrafter"/>
</dbReference>
<dbReference type="GO" id="GO:0042823">
    <property type="term" value="P:pyridoxal phosphate biosynthetic process"/>
    <property type="evidence" value="ECO:0007669"/>
    <property type="project" value="UniProtKB-UniRule"/>
</dbReference>
<dbReference type="GO" id="GO:0008615">
    <property type="term" value="P:pyridoxine biosynthetic process"/>
    <property type="evidence" value="ECO:0007669"/>
    <property type="project" value="TreeGrafter"/>
</dbReference>
<dbReference type="CDD" id="cd04727">
    <property type="entry name" value="pdxS"/>
    <property type="match status" value="1"/>
</dbReference>
<dbReference type="FunFam" id="3.20.20.70:FF:000001">
    <property type="entry name" value="Pyridoxine biosynthesis protein PDX1"/>
    <property type="match status" value="1"/>
</dbReference>
<dbReference type="Gene3D" id="3.20.20.70">
    <property type="entry name" value="Aldolase class I"/>
    <property type="match status" value="1"/>
</dbReference>
<dbReference type="HAMAP" id="MF_01824">
    <property type="entry name" value="PdxS"/>
    <property type="match status" value="1"/>
</dbReference>
<dbReference type="InterPro" id="IPR013785">
    <property type="entry name" value="Aldolase_TIM"/>
</dbReference>
<dbReference type="InterPro" id="IPR001852">
    <property type="entry name" value="PdxS/SNZ"/>
</dbReference>
<dbReference type="InterPro" id="IPR033755">
    <property type="entry name" value="PdxS/SNZ_N"/>
</dbReference>
<dbReference type="InterPro" id="IPR011060">
    <property type="entry name" value="RibuloseP-bd_barrel"/>
</dbReference>
<dbReference type="NCBIfam" id="NF003215">
    <property type="entry name" value="PRK04180.1"/>
    <property type="match status" value="1"/>
</dbReference>
<dbReference type="NCBIfam" id="TIGR00343">
    <property type="entry name" value="pyridoxal 5'-phosphate synthase lyase subunit PdxS"/>
    <property type="match status" value="1"/>
</dbReference>
<dbReference type="PANTHER" id="PTHR31829">
    <property type="entry name" value="PYRIDOXAL 5'-PHOSPHATE SYNTHASE SUBUNIT SNZ1-RELATED"/>
    <property type="match status" value="1"/>
</dbReference>
<dbReference type="PANTHER" id="PTHR31829:SF0">
    <property type="entry name" value="PYRIDOXAL 5'-PHOSPHATE SYNTHASE SUBUNIT SNZ1-RELATED"/>
    <property type="match status" value="1"/>
</dbReference>
<dbReference type="Pfam" id="PF01680">
    <property type="entry name" value="SOR_SNZ"/>
    <property type="match status" value="1"/>
</dbReference>
<dbReference type="PIRSF" id="PIRSF029271">
    <property type="entry name" value="Pdx1"/>
    <property type="match status" value="1"/>
</dbReference>
<dbReference type="SUPFAM" id="SSF51366">
    <property type="entry name" value="Ribulose-phoshate binding barrel"/>
    <property type="match status" value="1"/>
</dbReference>
<dbReference type="PROSITE" id="PS01235">
    <property type="entry name" value="PDXS_SNZ_1"/>
    <property type="match status" value="1"/>
</dbReference>
<dbReference type="PROSITE" id="PS51129">
    <property type="entry name" value="PDXS_SNZ_2"/>
    <property type="match status" value="1"/>
</dbReference>
<proteinExistence type="inferred from homology"/>
<gene>
    <name evidence="1" type="primary">pdxS</name>
    <name type="ordered locus">BCB4264_A0014</name>
</gene>
<feature type="chain" id="PRO_1000188209" description="Pyridoxal 5'-phosphate synthase subunit PdxS">
    <location>
        <begin position="1"/>
        <end position="295"/>
    </location>
</feature>
<feature type="active site" description="Schiff-base intermediate with D-ribose 5-phosphate" evidence="1">
    <location>
        <position position="82"/>
    </location>
</feature>
<feature type="binding site" evidence="1">
    <location>
        <position position="25"/>
    </location>
    <ligand>
        <name>D-ribose 5-phosphate</name>
        <dbReference type="ChEBI" id="CHEBI:78346"/>
    </ligand>
</feature>
<feature type="binding site" evidence="1">
    <location>
        <position position="154"/>
    </location>
    <ligand>
        <name>D-ribose 5-phosphate</name>
        <dbReference type="ChEBI" id="CHEBI:78346"/>
    </ligand>
</feature>
<feature type="binding site" evidence="1">
    <location>
        <position position="166"/>
    </location>
    <ligand>
        <name>D-glyceraldehyde 3-phosphate</name>
        <dbReference type="ChEBI" id="CHEBI:59776"/>
    </ligand>
</feature>
<feature type="binding site" evidence="1">
    <location>
        <position position="215"/>
    </location>
    <ligand>
        <name>D-ribose 5-phosphate</name>
        <dbReference type="ChEBI" id="CHEBI:78346"/>
    </ligand>
</feature>
<feature type="binding site" evidence="1">
    <location>
        <begin position="236"/>
        <end position="237"/>
    </location>
    <ligand>
        <name>D-ribose 5-phosphate</name>
        <dbReference type="ChEBI" id="CHEBI:78346"/>
    </ligand>
</feature>
<name>PDXS_BACC4</name>
<comment type="function">
    <text evidence="1">Catalyzes the formation of pyridoxal 5'-phosphate from ribose 5-phosphate (RBP), glyceraldehyde 3-phosphate (G3P) and ammonia. The ammonia is provided by the PdxT subunit. Can also use ribulose 5-phosphate and dihydroxyacetone phosphate as substrates, resulting from enzyme-catalyzed isomerization of RBP and G3P, respectively.</text>
</comment>
<comment type="catalytic activity">
    <reaction evidence="1">
        <text>aldehydo-D-ribose 5-phosphate + D-glyceraldehyde 3-phosphate + L-glutamine = pyridoxal 5'-phosphate + L-glutamate + phosphate + 3 H2O + H(+)</text>
        <dbReference type="Rhea" id="RHEA:31507"/>
        <dbReference type="ChEBI" id="CHEBI:15377"/>
        <dbReference type="ChEBI" id="CHEBI:15378"/>
        <dbReference type="ChEBI" id="CHEBI:29985"/>
        <dbReference type="ChEBI" id="CHEBI:43474"/>
        <dbReference type="ChEBI" id="CHEBI:58273"/>
        <dbReference type="ChEBI" id="CHEBI:58359"/>
        <dbReference type="ChEBI" id="CHEBI:59776"/>
        <dbReference type="ChEBI" id="CHEBI:597326"/>
        <dbReference type="EC" id="4.3.3.6"/>
    </reaction>
</comment>
<comment type="pathway">
    <text evidence="1">Cofactor biosynthesis; pyridoxal 5'-phosphate biosynthesis.</text>
</comment>
<comment type="subunit">
    <text evidence="1">In the presence of PdxT, forms a dodecamer of heterodimers.</text>
</comment>
<comment type="similarity">
    <text evidence="1">Belongs to the PdxS/SNZ family.</text>
</comment>
<evidence type="ECO:0000255" key="1">
    <source>
        <dbReference type="HAMAP-Rule" id="MF_01824"/>
    </source>
</evidence>
<organism>
    <name type="scientific">Bacillus cereus (strain B4264)</name>
    <dbReference type="NCBI Taxonomy" id="405532"/>
    <lineage>
        <taxon>Bacteria</taxon>
        <taxon>Bacillati</taxon>
        <taxon>Bacillota</taxon>
        <taxon>Bacilli</taxon>
        <taxon>Bacillales</taxon>
        <taxon>Bacillaceae</taxon>
        <taxon>Bacillus</taxon>
        <taxon>Bacillus cereus group</taxon>
    </lineage>
</organism>